<accession>A1QZ46</accession>
<organism>
    <name type="scientific">Borrelia turicatae (strain 91E135)</name>
    <dbReference type="NCBI Taxonomy" id="314724"/>
    <lineage>
        <taxon>Bacteria</taxon>
        <taxon>Pseudomonadati</taxon>
        <taxon>Spirochaetota</taxon>
        <taxon>Spirochaetia</taxon>
        <taxon>Spirochaetales</taxon>
        <taxon>Borreliaceae</taxon>
        <taxon>Borrelia</taxon>
    </lineage>
</organism>
<gene>
    <name evidence="1" type="primary">leuS</name>
    <name type="ordered locus">BT0251</name>
</gene>
<protein>
    <recommendedName>
        <fullName evidence="1">Leucine--tRNA ligase</fullName>
        <ecNumber evidence="1">6.1.1.4</ecNumber>
    </recommendedName>
    <alternativeName>
        <fullName evidence="1">Leucyl-tRNA synthetase</fullName>
        <shortName evidence="1">LeuRS</shortName>
    </alternativeName>
</protein>
<reference key="1">
    <citation type="submission" date="2004-12" db="EMBL/GenBank/DDBJ databases">
        <title>The genome sequence of Borrelia hermsii and Borrelia turicatae: comparative analysis of two agents of endemic N. America relapsing fever.</title>
        <authorList>
            <person name="Porcella S.F."/>
            <person name="Raffel S.J."/>
            <person name="Schrumpf M.E."/>
            <person name="Montgomery B."/>
            <person name="Smith T."/>
            <person name="Schwan T.G."/>
        </authorList>
    </citation>
    <scope>NUCLEOTIDE SEQUENCE [LARGE SCALE GENOMIC DNA]</scope>
    <source>
        <strain>91E135</strain>
    </source>
</reference>
<proteinExistence type="inferred from homology"/>
<feature type="chain" id="PRO_1000199182" description="Leucine--tRNA ligase">
    <location>
        <begin position="1"/>
        <end position="842"/>
    </location>
</feature>
<feature type="short sequence motif" description="'HIGH' region">
    <location>
        <begin position="44"/>
        <end position="55"/>
    </location>
</feature>
<feature type="short sequence motif" description="'KMSKS' region">
    <location>
        <begin position="619"/>
        <end position="623"/>
    </location>
</feature>
<feature type="binding site" evidence="1">
    <location>
        <position position="622"/>
    </location>
    <ligand>
        <name>ATP</name>
        <dbReference type="ChEBI" id="CHEBI:30616"/>
    </ligand>
</feature>
<evidence type="ECO:0000255" key="1">
    <source>
        <dbReference type="HAMAP-Rule" id="MF_00049"/>
    </source>
</evidence>
<sequence>MSEYNFTKIEKKWQNYWDKHKTYKVNEDPNIPKEKRIYILDMFPYPSANGLHVGHPEGYTATDILTRYKLLNGFNVLHPMGFDSFGLPAENYAIQTGEHPKKITEKNIEKFKEQIKALGFAYDWDREIRTHDENYYKWTQWIFLKLYKKGLAYIKEMPVWYCPDLGTVLSNEEVIQTPDGPRSERGFHKVQRKPLRQWVLKITEYAERLIKDLEEIDWPESVKEMQKNWIGKSIGAEIEFSIKASKEKIKVFTTRPDTIFGVTYLVLAPEHNIVDKITKDELKTIIAEYKDKEILKSDLERTSLEKDKTGVFTGAYAINPITEEEIPIWIGSYVLGIYGTGAVMSVPAHDERDFEFAKKYNLPIKQVVSQTGNNEILTKPFTENGISINTPEEFNNLKTEKVKTKVIEWLTKNKKGQKKVNYKLRDWIFSRQRYWGEPIPIIIDDDLNEIPLEEDELPLRLPEIENYKPSDTGESPLSKVQNWVNVKRNGKIYKRETNTMPQWAGSCWYYIRYLDPNNEKEFASKEKINYWMPVDLYIGGAEHSVLHLLYARFWHKVLYDLGYVNTKEPFKKLINQGMITSFAYQDENGILIPNDEVKKRDNKFFSKTNNKELKQIIAKMSKSLKNIINPDDIIKEYGADSMRIYEMFMGPLTDSKPWNTQGLIGIFRFLNKIWAIKNKELTKESAAKEIISGLHKTIKKVTEDIENLNFNTAISSLMIFINELLKHDKNYLEIFKPLTIILAPFAPHLGEELWEYMGEQPSIFKNAKWPKYDPNLIIDNTREIVLQVNGKIKDKIILNKGINEDTLKDIALKNHKIMQNIQNKQIIKIITVKDKLINIVTK</sequence>
<dbReference type="EC" id="6.1.1.4" evidence="1"/>
<dbReference type="EMBL" id="CP000049">
    <property type="protein sequence ID" value="AAX17588.1"/>
    <property type="molecule type" value="Genomic_DNA"/>
</dbReference>
<dbReference type="RefSeq" id="WP_011772207.1">
    <property type="nucleotide sequence ID" value="NC_008710.1"/>
</dbReference>
<dbReference type="SMR" id="A1QZ46"/>
<dbReference type="KEGG" id="btu:BT0251"/>
<dbReference type="eggNOG" id="COG0495">
    <property type="taxonomic scope" value="Bacteria"/>
</dbReference>
<dbReference type="HOGENOM" id="CLU_004427_0_0_12"/>
<dbReference type="Proteomes" id="UP000001205">
    <property type="component" value="Chromosome"/>
</dbReference>
<dbReference type="GO" id="GO:0005829">
    <property type="term" value="C:cytosol"/>
    <property type="evidence" value="ECO:0007669"/>
    <property type="project" value="TreeGrafter"/>
</dbReference>
<dbReference type="GO" id="GO:0002161">
    <property type="term" value="F:aminoacyl-tRNA deacylase activity"/>
    <property type="evidence" value="ECO:0007669"/>
    <property type="project" value="InterPro"/>
</dbReference>
<dbReference type="GO" id="GO:0005524">
    <property type="term" value="F:ATP binding"/>
    <property type="evidence" value="ECO:0007669"/>
    <property type="project" value="UniProtKB-UniRule"/>
</dbReference>
<dbReference type="GO" id="GO:0004823">
    <property type="term" value="F:leucine-tRNA ligase activity"/>
    <property type="evidence" value="ECO:0007669"/>
    <property type="project" value="UniProtKB-UniRule"/>
</dbReference>
<dbReference type="GO" id="GO:0006429">
    <property type="term" value="P:leucyl-tRNA aminoacylation"/>
    <property type="evidence" value="ECO:0007669"/>
    <property type="project" value="UniProtKB-UniRule"/>
</dbReference>
<dbReference type="CDD" id="cd07958">
    <property type="entry name" value="Anticodon_Ia_Leu_BEm"/>
    <property type="match status" value="1"/>
</dbReference>
<dbReference type="CDD" id="cd00812">
    <property type="entry name" value="LeuRS_core"/>
    <property type="match status" value="1"/>
</dbReference>
<dbReference type="FunFam" id="3.40.50.620:FF:000056">
    <property type="entry name" value="Leucine--tRNA ligase"/>
    <property type="match status" value="1"/>
</dbReference>
<dbReference type="FunFam" id="3.40.50.620:FF:000077">
    <property type="entry name" value="Leucine--tRNA ligase"/>
    <property type="match status" value="1"/>
</dbReference>
<dbReference type="FunFam" id="1.10.730.10:FF:000011">
    <property type="entry name" value="Leucine--tRNA ligase chloroplastic/mitochondrial"/>
    <property type="match status" value="1"/>
</dbReference>
<dbReference type="Gene3D" id="3.40.50.620">
    <property type="entry name" value="HUPs"/>
    <property type="match status" value="2"/>
</dbReference>
<dbReference type="Gene3D" id="1.10.730.10">
    <property type="entry name" value="Isoleucyl-tRNA Synthetase, Domain 1"/>
    <property type="match status" value="1"/>
</dbReference>
<dbReference type="HAMAP" id="MF_00049_B">
    <property type="entry name" value="Leu_tRNA_synth_B"/>
    <property type="match status" value="1"/>
</dbReference>
<dbReference type="InterPro" id="IPR001412">
    <property type="entry name" value="aa-tRNA-synth_I_CS"/>
</dbReference>
<dbReference type="InterPro" id="IPR002300">
    <property type="entry name" value="aa-tRNA-synth_Ia"/>
</dbReference>
<dbReference type="InterPro" id="IPR002302">
    <property type="entry name" value="Leu-tRNA-ligase"/>
</dbReference>
<dbReference type="InterPro" id="IPR025709">
    <property type="entry name" value="Leu_tRNA-synth_edit"/>
</dbReference>
<dbReference type="InterPro" id="IPR013155">
    <property type="entry name" value="M/V/L/I-tRNA-synth_anticd-bd"/>
</dbReference>
<dbReference type="InterPro" id="IPR015413">
    <property type="entry name" value="Methionyl/Leucyl_tRNA_Synth"/>
</dbReference>
<dbReference type="InterPro" id="IPR014729">
    <property type="entry name" value="Rossmann-like_a/b/a_fold"/>
</dbReference>
<dbReference type="InterPro" id="IPR009080">
    <property type="entry name" value="tRNAsynth_Ia_anticodon-bd"/>
</dbReference>
<dbReference type="InterPro" id="IPR009008">
    <property type="entry name" value="Val/Leu/Ile-tRNA-synth_edit"/>
</dbReference>
<dbReference type="NCBIfam" id="TIGR00396">
    <property type="entry name" value="leuS_bact"/>
    <property type="match status" value="1"/>
</dbReference>
<dbReference type="PANTHER" id="PTHR43740:SF2">
    <property type="entry name" value="LEUCINE--TRNA LIGASE, MITOCHONDRIAL"/>
    <property type="match status" value="1"/>
</dbReference>
<dbReference type="PANTHER" id="PTHR43740">
    <property type="entry name" value="LEUCYL-TRNA SYNTHETASE"/>
    <property type="match status" value="1"/>
</dbReference>
<dbReference type="Pfam" id="PF08264">
    <property type="entry name" value="Anticodon_1"/>
    <property type="match status" value="1"/>
</dbReference>
<dbReference type="Pfam" id="PF00133">
    <property type="entry name" value="tRNA-synt_1"/>
    <property type="match status" value="1"/>
</dbReference>
<dbReference type="Pfam" id="PF13603">
    <property type="entry name" value="tRNA-synt_1_2"/>
    <property type="match status" value="1"/>
</dbReference>
<dbReference type="Pfam" id="PF09334">
    <property type="entry name" value="tRNA-synt_1g"/>
    <property type="match status" value="1"/>
</dbReference>
<dbReference type="PRINTS" id="PR00985">
    <property type="entry name" value="TRNASYNTHLEU"/>
</dbReference>
<dbReference type="SUPFAM" id="SSF47323">
    <property type="entry name" value="Anticodon-binding domain of a subclass of class I aminoacyl-tRNA synthetases"/>
    <property type="match status" value="1"/>
</dbReference>
<dbReference type="SUPFAM" id="SSF52374">
    <property type="entry name" value="Nucleotidylyl transferase"/>
    <property type="match status" value="1"/>
</dbReference>
<dbReference type="SUPFAM" id="SSF50677">
    <property type="entry name" value="ValRS/IleRS/LeuRS editing domain"/>
    <property type="match status" value="1"/>
</dbReference>
<dbReference type="PROSITE" id="PS00178">
    <property type="entry name" value="AA_TRNA_LIGASE_I"/>
    <property type="match status" value="1"/>
</dbReference>
<comment type="catalytic activity">
    <reaction evidence="1">
        <text>tRNA(Leu) + L-leucine + ATP = L-leucyl-tRNA(Leu) + AMP + diphosphate</text>
        <dbReference type="Rhea" id="RHEA:11688"/>
        <dbReference type="Rhea" id="RHEA-COMP:9613"/>
        <dbReference type="Rhea" id="RHEA-COMP:9622"/>
        <dbReference type="ChEBI" id="CHEBI:30616"/>
        <dbReference type="ChEBI" id="CHEBI:33019"/>
        <dbReference type="ChEBI" id="CHEBI:57427"/>
        <dbReference type="ChEBI" id="CHEBI:78442"/>
        <dbReference type="ChEBI" id="CHEBI:78494"/>
        <dbReference type="ChEBI" id="CHEBI:456215"/>
        <dbReference type="EC" id="6.1.1.4"/>
    </reaction>
</comment>
<comment type="subcellular location">
    <subcellularLocation>
        <location evidence="1">Cytoplasm</location>
    </subcellularLocation>
</comment>
<comment type="similarity">
    <text evidence="1">Belongs to the class-I aminoacyl-tRNA synthetase family.</text>
</comment>
<keyword id="KW-0030">Aminoacyl-tRNA synthetase</keyword>
<keyword id="KW-0067">ATP-binding</keyword>
<keyword id="KW-0963">Cytoplasm</keyword>
<keyword id="KW-0436">Ligase</keyword>
<keyword id="KW-0547">Nucleotide-binding</keyword>
<keyword id="KW-0648">Protein biosynthesis</keyword>
<keyword id="KW-1185">Reference proteome</keyword>
<name>SYL_BORT9</name>